<reference key="1">
    <citation type="journal article" date="2010" name="J. Bacteriol.">
        <title>Complete genome sequence of Beijerinckia indica subsp. indica.</title>
        <authorList>
            <person name="Tamas I."/>
            <person name="Dedysh S.N."/>
            <person name="Liesack W."/>
            <person name="Stott M.B."/>
            <person name="Alam M."/>
            <person name="Murrell J.C."/>
            <person name="Dunfield P.F."/>
        </authorList>
    </citation>
    <scope>NUCLEOTIDE SEQUENCE [LARGE SCALE GENOMIC DNA]</scope>
    <source>
        <strain>ATCC 9039 / DSM 1715 / NCIMB 8712</strain>
    </source>
</reference>
<comment type="function">
    <text evidence="1">Catalyzes the conversion of glucosamine-6-phosphate to glucosamine-1-phosphate.</text>
</comment>
<comment type="catalytic activity">
    <reaction evidence="1">
        <text>alpha-D-glucosamine 1-phosphate = D-glucosamine 6-phosphate</text>
        <dbReference type="Rhea" id="RHEA:23424"/>
        <dbReference type="ChEBI" id="CHEBI:58516"/>
        <dbReference type="ChEBI" id="CHEBI:58725"/>
        <dbReference type="EC" id="5.4.2.10"/>
    </reaction>
</comment>
<comment type="cofactor">
    <cofactor evidence="1">
        <name>Mg(2+)</name>
        <dbReference type="ChEBI" id="CHEBI:18420"/>
    </cofactor>
    <text evidence="1">Binds 1 Mg(2+) ion per subunit.</text>
</comment>
<comment type="PTM">
    <text evidence="1">Activated by phosphorylation.</text>
</comment>
<comment type="similarity">
    <text evidence="1">Belongs to the phosphohexose mutase family.</text>
</comment>
<name>GLMM_BEII9</name>
<sequence length="451" mass="48561">MARKHFGTDGIRGRANAAITPELAMKVAQATGVLFQRGEQRHRAVIGKDTRLSGYMIEYAMVAGFTSVGMDVLLLGPMPTPAVAMLTPSMRADVGVMISASHNPYEDNGIKLFGPDGFKLSDEMEAEIEAKLDRDVALKLSKPADLGRAKRVEGAQARYIEFTKRTLTRSLSLEGLRIVIDCANGAGYKVAPEALWELGAEVFAIGTEPDGFNINRDVGSTAPAALVKKVHEVRADIGIALDGDADRVIIVDENGKVIDGDQLMAAIAAGWQEEGRLARPGIVATLMSNLGLERYLESIGLTLARTAVGDRHVLEHMRAHGYNLGGEQSGHIILSDYCTTGDGLVAALQVLALVKRLGKPVSQVCRRFDPVPQILKNVRVNAAQSLEQDHVKRVIEEGHRKLGKNGRLVIRPSGTEPVVRVMGEGDNRDLVETIVDDICEALNAATPLAAE</sequence>
<proteinExistence type="inferred from homology"/>
<evidence type="ECO:0000255" key="1">
    <source>
        <dbReference type="HAMAP-Rule" id="MF_01554"/>
    </source>
</evidence>
<organism>
    <name type="scientific">Beijerinckia indica subsp. indica (strain ATCC 9039 / DSM 1715 / NCIMB 8712)</name>
    <dbReference type="NCBI Taxonomy" id="395963"/>
    <lineage>
        <taxon>Bacteria</taxon>
        <taxon>Pseudomonadati</taxon>
        <taxon>Pseudomonadota</taxon>
        <taxon>Alphaproteobacteria</taxon>
        <taxon>Hyphomicrobiales</taxon>
        <taxon>Beijerinckiaceae</taxon>
        <taxon>Beijerinckia</taxon>
    </lineage>
</organism>
<protein>
    <recommendedName>
        <fullName evidence="1">Phosphoglucosamine mutase</fullName>
        <ecNumber evidence="1">5.4.2.10</ecNumber>
    </recommendedName>
</protein>
<accession>B2IGB3</accession>
<gene>
    <name evidence="1" type="primary">glmM</name>
    <name type="ordered locus">Bind_3635</name>
</gene>
<dbReference type="EC" id="5.4.2.10" evidence="1"/>
<dbReference type="EMBL" id="CP001016">
    <property type="protein sequence ID" value="ACB97187.1"/>
    <property type="molecule type" value="Genomic_DNA"/>
</dbReference>
<dbReference type="RefSeq" id="WP_012386535.1">
    <property type="nucleotide sequence ID" value="NC_010581.1"/>
</dbReference>
<dbReference type="SMR" id="B2IGB3"/>
<dbReference type="STRING" id="395963.Bind_3635"/>
<dbReference type="KEGG" id="bid:Bind_3635"/>
<dbReference type="eggNOG" id="COG1109">
    <property type="taxonomic scope" value="Bacteria"/>
</dbReference>
<dbReference type="HOGENOM" id="CLU_016950_7_0_5"/>
<dbReference type="OrthoDB" id="9803322at2"/>
<dbReference type="Proteomes" id="UP000001695">
    <property type="component" value="Chromosome"/>
</dbReference>
<dbReference type="GO" id="GO:0005829">
    <property type="term" value="C:cytosol"/>
    <property type="evidence" value="ECO:0007669"/>
    <property type="project" value="TreeGrafter"/>
</dbReference>
<dbReference type="GO" id="GO:0000287">
    <property type="term" value="F:magnesium ion binding"/>
    <property type="evidence" value="ECO:0007669"/>
    <property type="project" value="UniProtKB-UniRule"/>
</dbReference>
<dbReference type="GO" id="GO:0008966">
    <property type="term" value="F:phosphoglucosamine mutase activity"/>
    <property type="evidence" value="ECO:0007669"/>
    <property type="project" value="UniProtKB-UniRule"/>
</dbReference>
<dbReference type="GO" id="GO:0004615">
    <property type="term" value="F:phosphomannomutase activity"/>
    <property type="evidence" value="ECO:0007669"/>
    <property type="project" value="TreeGrafter"/>
</dbReference>
<dbReference type="GO" id="GO:0005975">
    <property type="term" value="P:carbohydrate metabolic process"/>
    <property type="evidence" value="ECO:0007669"/>
    <property type="project" value="InterPro"/>
</dbReference>
<dbReference type="GO" id="GO:0009252">
    <property type="term" value="P:peptidoglycan biosynthetic process"/>
    <property type="evidence" value="ECO:0007669"/>
    <property type="project" value="TreeGrafter"/>
</dbReference>
<dbReference type="GO" id="GO:0006048">
    <property type="term" value="P:UDP-N-acetylglucosamine biosynthetic process"/>
    <property type="evidence" value="ECO:0007669"/>
    <property type="project" value="TreeGrafter"/>
</dbReference>
<dbReference type="CDD" id="cd05802">
    <property type="entry name" value="GlmM"/>
    <property type="match status" value="1"/>
</dbReference>
<dbReference type="FunFam" id="3.30.310.50:FF:000001">
    <property type="entry name" value="Phosphoglucosamine mutase"/>
    <property type="match status" value="1"/>
</dbReference>
<dbReference type="FunFam" id="3.40.120.10:FF:000001">
    <property type="entry name" value="Phosphoglucosamine mutase"/>
    <property type="match status" value="1"/>
</dbReference>
<dbReference type="FunFam" id="3.40.120.10:FF:000003">
    <property type="entry name" value="Phosphoglucosamine mutase"/>
    <property type="match status" value="1"/>
</dbReference>
<dbReference type="Gene3D" id="3.40.120.10">
    <property type="entry name" value="Alpha-D-Glucose-1,6-Bisphosphate, subunit A, domain 3"/>
    <property type="match status" value="3"/>
</dbReference>
<dbReference type="Gene3D" id="3.30.310.50">
    <property type="entry name" value="Alpha-D-phosphohexomutase, C-terminal domain"/>
    <property type="match status" value="1"/>
</dbReference>
<dbReference type="HAMAP" id="MF_01554_B">
    <property type="entry name" value="GlmM_B"/>
    <property type="match status" value="1"/>
</dbReference>
<dbReference type="InterPro" id="IPR005844">
    <property type="entry name" value="A-D-PHexomutase_a/b/a-I"/>
</dbReference>
<dbReference type="InterPro" id="IPR016055">
    <property type="entry name" value="A-D-PHexomutase_a/b/a-I/II/III"/>
</dbReference>
<dbReference type="InterPro" id="IPR005845">
    <property type="entry name" value="A-D-PHexomutase_a/b/a-II"/>
</dbReference>
<dbReference type="InterPro" id="IPR005846">
    <property type="entry name" value="A-D-PHexomutase_a/b/a-III"/>
</dbReference>
<dbReference type="InterPro" id="IPR005843">
    <property type="entry name" value="A-D-PHexomutase_C"/>
</dbReference>
<dbReference type="InterPro" id="IPR036900">
    <property type="entry name" value="A-D-PHexomutase_C_sf"/>
</dbReference>
<dbReference type="InterPro" id="IPR016066">
    <property type="entry name" value="A-D-PHexomutase_CS"/>
</dbReference>
<dbReference type="InterPro" id="IPR005841">
    <property type="entry name" value="Alpha-D-phosphohexomutase_SF"/>
</dbReference>
<dbReference type="InterPro" id="IPR006352">
    <property type="entry name" value="GlmM_bact"/>
</dbReference>
<dbReference type="InterPro" id="IPR050060">
    <property type="entry name" value="Phosphoglucosamine_mutase"/>
</dbReference>
<dbReference type="NCBIfam" id="TIGR01455">
    <property type="entry name" value="glmM"/>
    <property type="match status" value="1"/>
</dbReference>
<dbReference type="NCBIfam" id="NF008139">
    <property type="entry name" value="PRK10887.1"/>
    <property type="match status" value="1"/>
</dbReference>
<dbReference type="PANTHER" id="PTHR42946:SF1">
    <property type="entry name" value="PHOSPHOGLUCOMUTASE (ALPHA-D-GLUCOSE-1,6-BISPHOSPHATE-DEPENDENT)"/>
    <property type="match status" value="1"/>
</dbReference>
<dbReference type="PANTHER" id="PTHR42946">
    <property type="entry name" value="PHOSPHOHEXOSE MUTASE"/>
    <property type="match status" value="1"/>
</dbReference>
<dbReference type="Pfam" id="PF02878">
    <property type="entry name" value="PGM_PMM_I"/>
    <property type="match status" value="1"/>
</dbReference>
<dbReference type="Pfam" id="PF02879">
    <property type="entry name" value="PGM_PMM_II"/>
    <property type="match status" value="1"/>
</dbReference>
<dbReference type="Pfam" id="PF02880">
    <property type="entry name" value="PGM_PMM_III"/>
    <property type="match status" value="1"/>
</dbReference>
<dbReference type="Pfam" id="PF00408">
    <property type="entry name" value="PGM_PMM_IV"/>
    <property type="match status" value="1"/>
</dbReference>
<dbReference type="PRINTS" id="PR00509">
    <property type="entry name" value="PGMPMM"/>
</dbReference>
<dbReference type="SUPFAM" id="SSF55957">
    <property type="entry name" value="Phosphoglucomutase, C-terminal domain"/>
    <property type="match status" value="1"/>
</dbReference>
<dbReference type="SUPFAM" id="SSF53738">
    <property type="entry name" value="Phosphoglucomutase, first 3 domains"/>
    <property type="match status" value="3"/>
</dbReference>
<dbReference type="PROSITE" id="PS00710">
    <property type="entry name" value="PGM_PMM"/>
    <property type="match status" value="1"/>
</dbReference>
<feature type="chain" id="PRO_1000201063" description="Phosphoglucosamine mutase">
    <location>
        <begin position="1"/>
        <end position="451"/>
    </location>
</feature>
<feature type="active site" description="Phosphoserine intermediate" evidence="1">
    <location>
        <position position="101"/>
    </location>
</feature>
<feature type="binding site" description="via phosphate group" evidence="1">
    <location>
        <position position="101"/>
    </location>
    <ligand>
        <name>Mg(2+)</name>
        <dbReference type="ChEBI" id="CHEBI:18420"/>
    </ligand>
</feature>
<feature type="binding site" evidence="1">
    <location>
        <position position="242"/>
    </location>
    <ligand>
        <name>Mg(2+)</name>
        <dbReference type="ChEBI" id="CHEBI:18420"/>
    </ligand>
</feature>
<feature type="binding site" evidence="1">
    <location>
        <position position="244"/>
    </location>
    <ligand>
        <name>Mg(2+)</name>
        <dbReference type="ChEBI" id="CHEBI:18420"/>
    </ligand>
</feature>
<feature type="binding site" evidence="1">
    <location>
        <position position="246"/>
    </location>
    <ligand>
        <name>Mg(2+)</name>
        <dbReference type="ChEBI" id="CHEBI:18420"/>
    </ligand>
</feature>
<feature type="modified residue" description="Phosphoserine" evidence="1">
    <location>
        <position position="101"/>
    </location>
</feature>
<keyword id="KW-0413">Isomerase</keyword>
<keyword id="KW-0460">Magnesium</keyword>
<keyword id="KW-0479">Metal-binding</keyword>
<keyword id="KW-0597">Phosphoprotein</keyword>
<keyword id="KW-1185">Reference proteome</keyword>